<sequence>MPLRLIFMGTPDFAVPTLLELAGHGHEIAAVYTRAPKPGGRRGLALVPTPIETEARRLGIPVVTPKTLKTEEALTAFRAHQADAAVVVAYGMILPQAILDAPKLGCYNLHASLLPRWRGAAPINRAIMAGDAETGVMVMKMDVGLDTGDVAMAERLPITDAMTASDLHDQLARIGADLMVRAMAALERGGLTLTKQADAGVTYAAKIEKAEARIDWSKPANAVLRHIHGLSPFPGAWSEVTLDGEAVRLKILRCALADGRGEPGAVINEQLTIACADGAVRVTELQRAGKGPMKAADFLRGTRVAPGLRFG</sequence>
<organism>
    <name type="scientific">Bradyrhizobium sp. (strain BTAi1 / ATCC BAA-1182)</name>
    <dbReference type="NCBI Taxonomy" id="288000"/>
    <lineage>
        <taxon>Bacteria</taxon>
        <taxon>Pseudomonadati</taxon>
        <taxon>Pseudomonadota</taxon>
        <taxon>Alphaproteobacteria</taxon>
        <taxon>Hyphomicrobiales</taxon>
        <taxon>Nitrobacteraceae</taxon>
        <taxon>Bradyrhizobium</taxon>
    </lineage>
</organism>
<keyword id="KW-0648">Protein biosynthesis</keyword>
<keyword id="KW-1185">Reference proteome</keyword>
<keyword id="KW-0808">Transferase</keyword>
<gene>
    <name evidence="1" type="primary">fmt</name>
    <name type="ordered locus">BBta_7336</name>
</gene>
<proteinExistence type="inferred from homology"/>
<reference key="1">
    <citation type="journal article" date="2007" name="Science">
        <title>Legumes symbioses: absence of nod genes in photosynthetic bradyrhizobia.</title>
        <authorList>
            <person name="Giraud E."/>
            <person name="Moulin L."/>
            <person name="Vallenet D."/>
            <person name="Barbe V."/>
            <person name="Cytryn E."/>
            <person name="Avarre J.-C."/>
            <person name="Jaubert M."/>
            <person name="Simon D."/>
            <person name="Cartieaux F."/>
            <person name="Prin Y."/>
            <person name="Bena G."/>
            <person name="Hannibal L."/>
            <person name="Fardoux J."/>
            <person name="Kojadinovic M."/>
            <person name="Vuillet L."/>
            <person name="Lajus A."/>
            <person name="Cruveiller S."/>
            <person name="Rouy Z."/>
            <person name="Mangenot S."/>
            <person name="Segurens B."/>
            <person name="Dossat C."/>
            <person name="Franck W.L."/>
            <person name="Chang W.-S."/>
            <person name="Saunders E."/>
            <person name="Bruce D."/>
            <person name="Richardson P."/>
            <person name="Normand P."/>
            <person name="Dreyfus B."/>
            <person name="Pignol D."/>
            <person name="Stacey G."/>
            <person name="Emerich D."/>
            <person name="Vermeglio A."/>
            <person name="Medigue C."/>
            <person name="Sadowsky M."/>
        </authorList>
    </citation>
    <scope>NUCLEOTIDE SEQUENCE [LARGE SCALE GENOMIC DNA]</scope>
    <source>
        <strain>BTAi1 / ATCC BAA-1182</strain>
    </source>
</reference>
<comment type="function">
    <text evidence="1">Attaches a formyl group to the free amino group of methionyl-tRNA(fMet). The formyl group appears to play a dual role in the initiator identity of N-formylmethionyl-tRNA by promoting its recognition by IF2 and preventing the misappropriation of this tRNA by the elongation apparatus.</text>
</comment>
<comment type="catalytic activity">
    <reaction evidence="1">
        <text>L-methionyl-tRNA(fMet) + (6R)-10-formyltetrahydrofolate = N-formyl-L-methionyl-tRNA(fMet) + (6S)-5,6,7,8-tetrahydrofolate + H(+)</text>
        <dbReference type="Rhea" id="RHEA:24380"/>
        <dbReference type="Rhea" id="RHEA-COMP:9952"/>
        <dbReference type="Rhea" id="RHEA-COMP:9953"/>
        <dbReference type="ChEBI" id="CHEBI:15378"/>
        <dbReference type="ChEBI" id="CHEBI:57453"/>
        <dbReference type="ChEBI" id="CHEBI:78530"/>
        <dbReference type="ChEBI" id="CHEBI:78844"/>
        <dbReference type="ChEBI" id="CHEBI:195366"/>
        <dbReference type="EC" id="2.1.2.9"/>
    </reaction>
</comment>
<comment type="similarity">
    <text evidence="1">Belongs to the Fmt family.</text>
</comment>
<dbReference type="EC" id="2.1.2.9" evidence="1"/>
<dbReference type="EMBL" id="CP000494">
    <property type="protein sequence ID" value="ABQ39200.1"/>
    <property type="molecule type" value="Genomic_DNA"/>
</dbReference>
<dbReference type="RefSeq" id="WP_012047103.1">
    <property type="nucleotide sequence ID" value="NC_009485.1"/>
</dbReference>
<dbReference type="SMR" id="A5ESQ6"/>
<dbReference type="STRING" id="288000.BBta_7336"/>
<dbReference type="KEGG" id="bbt:BBta_7336"/>
<dbReference type="eggNOG" id="COG0223">
    <property type="taxonomic scope" value="Bacteria"/>
</dbReference>
<dbReference type="HOGENOM" id="CLU_033347_1_2_5"/>
<dbReference type="OrthoDB" id="9802815at2"/>
<dbReference type="Proteomes" id="UP000000246">
    <property type="component" value="Chromosome"/>
</dbReference>
<dbReference type="GO" id="GO:0005829">
    <property type="term" value="C:cytosol"/>
    <property type="evidence" value="ECO:0007669"/>
    <property type="project" value="TreeGrafter"/>
</dbReference>
<dbReference type="GO" id="GO:0004479">
    <property type="term" value="F:methionyl-tRNA formyltransferase activity"/>
    <property type="evidence" value="ECO:0007669"/>
    <property type="project" value="UniProtKB-UniRule"/>
</dbReference>
<dbReference type="CDD" id="cd08646">
    <property type="entry name" value="FMT_core_Met-tRNA-FMT_N"/>
    <property type="match status" value="1"/>
</dbReference>
<dbReference type="CDD" id="cd08704">
    <property type="entry name" value="Met_tRNA_FMT_C"/>
    <property type="match status" value="1"/>
</dbReference>
<dbReference type="FunFam" id="3.40.50.12230:FF:000001">
    <property type="entry name" value="Methionyl-tRNA formyltransferase"/>
    <property type="match status" value="1"/>
</dbReference>
<dbReference type="Gene3D" id="3.40.50.12230">
    <property type="match status" value="1"/>
</dbReference>
<dbReference type="HAMAP" id="MF_00182">
    <property type="entry name" value="Formyl_trans"/>
    <property type="match status" value="1"/>
</dbReference>
<dbReference type="InterPro" id="IPR005794">
    <property type="entry name" value="Fmt"/>
</dbReference>
<dbReference type="InterPro" id="IPR005793">
    <property type="entry name" value="Formyl_trans_C"/>
</dbReference>
<dbReference type="InterPro" id="IPR002376">
    <property type="entry name" value="Formyl_transf_N"/>
</dbReference>
<dbReference type="InterPro" id="IPR036477">
    <property type="entry name" value="Formyl_transf_N_sf"/>
</dbReference>
<dbReference type="InterPro" id="IPR011034">
    <property type="entry name" value="Formyl_transferase-like_C_sf"/>
</dbReference>
<dbReference type="InterPro" id="IPR001555">
    <property type="entry name" value="GART_AS"/>
</dbReference>
<dbReference type="InterPro" id="IPR044135">
    <property type="entry name" value="Met-tRNA-FMT_C"/>
</dbReference>
<dbReference type="InterPro" id="IPR041711">
    <property type="entry name" value="Met-tRNA-FMT_N"/>
</dbReference>
<dbReference type="NCBIfam" id="TIGR00460">
    <property type="entry name" value="fmt"/>
    <property type="match status" value="1"/>
</dbReference>
<dbReference type="PANTHER" id="PTHR11138">
    <property type="entry name" value="METHIONYL-TRNA FORMYLTRANSFERASE"/>
    <property type="match status" value="1"/>
</dbReference>
<dbReference type="PANTHER" id="PTHR11138:SF5">
    <property type="entry name" value="METHIONYL-TRNA FORMYLTRANSFERASE, MITOCHONDRIAL"/>
    <property type="match status" value="1"/>
</dbReference>
<dbReference type="Pfam" id="PF02911">
    <property type="entry name" value="Formyl_trans_C"/>
    <property type="match status" value="1"/>
</dbReference>
<dbReference type="Pfam" id="PF00551">
    <property type="entry name" value="Formyl_trans_N"/>
    <property type="match status" value="1"/>
</dbReference>
<dbReference type="SUPFAM" id="SSF50486">
    <property type="entry name" value="FMT C-terminal domain-like"/>
    <property type="match status" value="1"/>
</dbReference>
<dbReference type="SUPFAM" id="SSF53328">
    <property type="entry name" value="Formyltransferase"/>
    <property type="match status" value="1"/>
</dbReference>
<dbReference type="PROSITE" id="PS00373">
    <property type="entry name" value="GART"/>
    <property type="match status" value="1"/>
</dbReference>
<evidence type="ECO:0000255" key="1">
    <source>
        <dbReference type="HAMAP-Rule" id="MF_00182"/>
    </source>
</evidence>
<protein>
    <recommendedName>
        <fullName evidence="1">Methionyl-tRNA formyltransferase</fullName>
        <ecNumber evidence="1">2.1.2.9</ecNumber>
    </recommendedName>
</protein>
<feature type="chain" id="PRO_1000020026" description="Methionyl-tRNA formyltransferase">
    <location>
        <begin position="1"/>
        <end position="311"/>
    </location>
</feature>
<feature type="binding site" evidence="1">
    <location>
        <begin position="112"/>
        <end position="115"/>
    </location>
    <ligand>
        <name>(6S)-5,6,7,8-tetrahydrofolate</name>
        <dbReference type="ChEBI" id="CHEBI:57453"/>
    </ligand>
</feature>
<name>FMT_BRASB</name>
<accession>A5ESQ6</accession>